<reference key="1">
    <citation type="journal article" date="2005" name="PLoS Biol.">
        <title>Major structural differences and novel potential virulence mechanisms from the genomes of multiple Campylobacter species.</title>
        <authorList>
            <person name="Fouts D.E."/>
            <person name="Mongodin E.F."/>
            <person name="Mandrell R.E."/>
            <person name="Miller W.G."/>
            <person name="Rasko D.A."/>
            <person name="Ravel J."/>
            <person name="Brinkac L.M."/>
            <person name="DeBoy R.T."/>
            <person name="Parker C.T."/>
            <person name="Daugherty S.C."/>
            <person name="Dodson R.J."/>
            <person name="Durkin A.S."/>
            <person name="Madupu R."/>
            <person name="Sullivan S.A."/>
            <person name="Shetty J.U."/>
            <person name="Ayodeji M.A."/>
            <person name="Shvartsbeyn A."/>
            <person name="Schatz M.C."/>
            <person name="Badger J.H."/>
            <person name="Fraser C.M."/>
            <person name="Nelson K.E."/>
        </authorList>
    </citation>
    <scope>NUCLEOTIDE SEQUENCE [LARGE SCALE GENOMIC DNA]</scope>
    <source>
        <strain>RM1221</strain>
    </source>
</reference>
<accession>Q5HS96</accession>
<proteinExistence type="inferred from homology"/>
<keyword id="KW-0687">Ribonucleoprotein</keyword>
<keyword id="KW-0689">Ribosomal protein</keyword>
<keyword id="KW-0694">RNA-binding</keyword>
<keyword id="KW-0699">rRNA-binding</keyword>
<protein>
    <recommendedName>
        <fullName evidence="1">Small ribosomal subunit protein uS3</fullName>
    </recommendedName>
    <alternativeName>
        <fullName evidence="3">30S ribosomal protein S3</fullName>
    </alternativeName>
</protein>
<feature type="chain" id="PRO_0000230686" description="Small ribosomal subunit protein uS3">
    <location>
        <begin position="1"/>
        <end position="233"/>
    </location>
</feature>
<feature type="domain" description="KH type-2" evidence="1">
    <location>
        <begin position="39"/>
        <end position="107"/>
    </location>
</feature>
<feature type="region of interest" description="Disordered" evidence="2">
    <location>
        <begin position="212"/>
        <end position="233"/>
    </location>
</feature>
<feature type="compositionally biased region" description="Basic and acidic residues" evidence="2">
    <location>
        <begin position="212"/>
        <end position="222"/>
    </location>
</feature>
<feature type="compositionally biased region" description="Basic residues" evidence="2">
    <location>
        <begin position="224"/>
        <end position="233"/>
    </location>
</feature>
<gene>
    <name evidence="1" type="primary">rpsC</name>
    <name type="ordered locus">CJE1869</name>
</gene>
<comment type="function">
    <text evidence="1">Binds the lower part of the 30S subunit head. Binds mRNA in the 70S ribosome, positioning it for translation.</text>
</comment>
<comment type="subunit">
    <text evidence="1">Part of the 30S ribosomal subunit. Forms a tight complex with proteins S10 and S14.</text>
</comment>
<comment type="similarity">
    <text evidence="1">Belongs to the universal ribosomal protein uS3 family.</text>
</comment>
<organism>
    <name type="scientific">Campylobacter jejuni (strain RM1221)</name>
    <dbReference type="NCBI Taxonomy" id="195099"/>
    <lineage>
        <taxon>Bacteria</taxon>
        <taxon>Pseudomonadati</taxon>
        <taxon>Campylobacterota</taxon>
        <taxon>Epsilonproteobacteria</taxon>
        <taxon>Campylobacterales</taxon>
        <taxon>Campylobacteraceae</taxon>
        <taxon>Campylobacter</taxon>
    </lineage>
</organism>
<name>RS3_CAMJR</name>
<sequence length="233" mass="26063">MGQKVNPIGLRLGINRNWESRWFPTKANLVENIGEDYKIRAFLKRKLYYAGISQILVERTAKKLRVTVVAARPGIIIGKKGSDVDNLRKELQDLIGKDVNINIKEERKAGASAQLAAESVATQLEKRIAFRRAMKKVIQGAQKAGAKGIKVSVSGRLGGAEMARTEWYLEGRVPLHTLRAKIDYGFAEARTTYGNIGVKVWIFKGEVLHKGMQPEKTEESAPAKKPRRTRRGK</sequence>
<evidence type="ECO:0000255" key="1">
    <source>
        <dbReference type="HAMAP-Rule" id="MF_01309"/>
    </source>
</evidence>
<evidence type="ECO:0000256" key="2">
    <source>
        <dbReference type="SAM" id="MobiDB-lite"/>
    </source>
</evidence>
<evidence type="ECO:0000305" key="3"/>
<dbReference type="EMBL" id="CP000025">
    <property type="protein sequence ID" value="AAW36291.1"/>
    <property type="molecule type" value="Genomic_DNA"/>
</dbReference>
<dbReference type="RefSeq" id="WP_002851138.1">
    <property type="nucleotide sequence ID" value="NC_003912.7"/>
</dbReference>
<dbReference type="SMR" id="Q5HS96"/>
<dbReference type="KEGG" id="cjr:CJE1869"/>
<dbReference type="HOGENOM" id="CLU_058591_0_2_7"/>
<dbReference type="GO" id="GO:0022627">
    <property type="term" value="C:cytosolic small ribosomal subunit"/>
    <property type="evidence" value="ECO:0007669"/>
    <property type="project" value="TreeGrafter"/>
</dbReference>
<dbReference type="GO" id="GO:0003729">
    <property type="term" value="F:mRNA binding"/>
    <property type="evidence" value="ECO:0007669"/>
    <property type="project" value="UniProtKB-UniRule"/>
</dbReference>
<dbReference type="GO" id="GO:0019843">
    <property type="term" value="F:rRNA binding"/>
    <property type="evidence" value="ECO:0007669"/>
    <property type="project" value="UniProtKB-UniRule"/>
</dbReference>
<dbReference type="GO" id="GO:0003735">
    <property type="term" value="F:structural constituent of ribosome"/>
    <property type="evidence" value="ECO:0007669"/>
    <property type="project" value="InterPro"/>
</dbReference>
<dbReference type="GO" id="GO:0006412">
    <property type="term" value="P:translation"/>
    <property type="evidence" value="ECO:0007669"/>
    <property type="project" value="UniProtKB-UniRule"/>
</dbReference>
<dbReference type="CDD" id="cd02412">
    <property type="entry name" value="KH-II_30S_S3"/>
    <property type="match status" value="1"/>
</dbReference>
<dbReference type="FunFam" id="3.30.1140.32:FF:000006">
    <property type="entry name" value="30S ribosomal protein S3"/>
    <property type="match status" value="1"/>
</dbReference>
<dbReference type="FunFam" id="3.30.300.20:FF:000001">
    <property type="entry name" value="30S ribosomal protein S3"/>
    <property type="match status" value="1"/>
</dbReference>
<dbReference type="Gene3D" id="3.30.300.20">
    <property type="match status" value="1"/>
</dbReference>
<dbReference type="Gene3D" id="3.30.1140.32">
    <property type="entry name" value="Ribosomal protein S3, C-terminal domain"/>
    <property type="match status" value="1"/>
</dbReference>
<dbReference type="HAMAP" id="MF_01309_B">
    <property type="entry name" value="Ribosomal_uS3_B"/>
    <property type="match status" value="1"/>
</dbReference>
<dbReference type="InterPro" id="IPR004087">
    <property type="entry name" value="KH_dom"/>
</dbReference>
<dbReference type="InterPro" id="IPR015946">
    <property type="entry name" value="KH_dom-like_a/b"/>
</dbReference>
<dbReference type="InterPro" id="IPR004044">
    <property type="entry name" value="KH_dom_type_2"/>
</dbReference>
<dbReference type="InterPro" id="IPR009019">
    <property type="entry name" value="KH_sf_prok-type"/>
</dbReference>
<dbReference type="InterPro" id="IPR036419">
    <property type="entry name" value="Ribosomal_S3_C_sf"/>
</dbReference>
<dbReference type="InterPro" id="IPR005704">
    <property type="entry name" value="Ribosomal_uS3_bac-typ"/>
</dbReference>
<dbReference type="InterPro" id="IPR001351">
    <property type="entry name" value="Ribosomal_uS3_C"/>
</dbReference>
<dbReference type="InterPro" id="IPR018280">
    <property type="entry name" value="Ribosomal_uS3_CS"/>
</dbReference>
<dbReference type="NCBIfam" id="TIGR01009">
    <property type="entry name" value="rpsC_bact"/>
    <property type="match status" value="1"/>
</dbReference>
<dbReference type="PANTHER" id="PTHR11760">
    <property type="entry name" value="30S/40S RIBOSOMAL PROTEIN S3"/>
    <property type="match status" value="1"/>
</dbReference>
<dbReference type="PANTHER" id="PTHR11760:SF19">
    <property type="entry name" value="SMALL RIBOSOMAL SUBUNIT PROTEIN US3C"/>
    <property type="match status" value="1"/>
</dbReference>
<dbReference type="Pfam" id="PF07650">
    <property type="entry name" value="KH_2"/>
    <property type="match status" value="1"/>
</dbReference>
<dbReference type="Pfam" id="PF00189">
    <property type="entry name" value="Ribosomal_S3_C"/>
    <property type="match status" value="1"/>
</dbReference>
<dbReference type="SMART" id="SM00322">
    <property type="entry name" value="KH"/>
    <property type="match status" value="1"/>
</dbReference>
<dbReference type="SUPFAM" id="SSF54814">
    <property type="entry name" value="Prokaryotic type KH domain (KH-domain type II)"/>
    <property type="match status" value="1"/>
</dbReference>
<dbReference type="SUPFAM" id="SSF54821">
    <property type="entry name" value="Ribosomal protein S3 C-terminal domain"/>
    <property type="match status" value="1"/>
</dbReference>
<dbReference type="PROSITE" id="PS50823">
    <property type="entry name" value="KH_TYPE_2"/>
    <property type="match status" value="1"/>
</dbReference>
<dbReference type="PROSITE" id="PS00548">
    <property type="entry name" value="RIBOSOMAL_S3"/>
    <property type="match status" value="1"/>
</dbReference>